<proteinExistence type="inferred from homology"/>
<name>RS6_PHYMT</name>
<organism>
    <name type="scientific">Phytoplasma mali (strain AT)</name>
    <dbReference type="NCBI Taxonomy" id="482235"/>
    <lineage>
        <taxon>Bacteria</taxon>
        <taxon>Bacillati</taxon>
        <taxon>Mycoplasmatota</taxon>
        <taxon>Mollicutes</taxon>
        <taxon>Acholeplasmatales</taxon>
        <taxon>Acholeplasmataceae</taxon>
        <taxon>Candidatus Phytoplasma</taxon>
        <taxon>16SrX (Apple proliferation group)</taxon>
    </lineage>
</organism>
<gene>
    <name evidence="1" type="primary">rpsF</name>
    <name type="ordered locus">ATP_00180</name>
</gene>
<dbReference type="EMBL" id="CU469464">
    <property type="protein sequence ID" value="CAP18367.1"/>
    <property type="molecule type" value="Genomic_DNA"/>
</dbReference>
<dbReference type="SMR" id="B3R0K3"/>
<dbReference type="STRING" id="37692.ATP_00180"/>
<dbReference type="KEGG" id="pml:ATP_00180"/>
<dbReference type="eggNOG" id="COG0360">
    <property type="taxonomic scope" value="Bacteria"/>
</dbReference>
<dbReference type="HOGENOM" id="CLU_113441_5_3_14"/>
<dbReference type="Proteomes" id="UP000002020">
    <property type="component" value="Chromosome"/>
</dbReference>
<dbReference type="GO" id="GO:0005737">
    <property type="term" value="C:cytoplasm"/>
    <property type="evidence" value="ECO:0007669"/>
    <property type="project" value="UniProtKB-ARBA"/>
</dbReference>
<dbReference type="GO" id="GO:1990904">
    <property type="term" value="C:ribonucleoprotein complex"/>
    <property type="evidence" value="ECO:0007669"/>
    <property type="project" value="UniProtKB-KW"/>
</dbReference>
<dbReference type="GO" id="GO:0005840">
    <property type="term" value="C:ribosome"/>
    <property type="evidence" value="ECO:0007669"/>
    <property type="project" value="UniProtKB-KW"/>
</dbReference>
<dbReference type="GO" id="GO:0070181">
    <property type="term" value="F:small ribosomal subunit rRNA binding"/>
    <property type="evidence" value="ECO:0007669"/>
    <property type="project" value="TreeGrafter"/>
</dbReference>
<dbReference type="GO" id="GO:0003735">
    <property type="term" value="F:structural constituent of ribosome"/>
    <property type="evidence" value="ECO:0007669"/>
    <property type="project" value="InterPro"/>
</dbReference>
<dbReference type="GO" id="GO:0006412">
    <property type="term" value="P:translation"/>
    <property type="evidence" value="ECO:0007669"/>
    <property type="project" value="UniProtKB-UniRule"/>
</dbReference>
<dbReference type="CDD" id="cd00473">
    <property type="entry name" value="bS6"/>
    <property type="match status" value="1"/>
</dbReference>
<dbReference type="Gene3D" id="3.30.70.60">
    <property type="match status" value="1"/>
</dbReference>
<dbReference type="HAMAP" id="MF_00360">
    <property type="entry name" value="Ribosomal_bS6"/>
    <property type="match status" value="1"/>
</dbReference>
<dbReference type="InterPro" id="IPR000529">
    <property type="entry name" value="Ribosomal_bS6"/>
</dbReference>
<dbReference type="InterPro" id="IPR035980">
    <property type="entry name" value="Ribosomal_bS6_sf"/>
</dbReference>
<dbReference type="InterPro" id="IPR020814">
    <property type="entry name" value="Ribosomal_S6_plastid/chlpt"/>
</dbReference>
<dbReference type="InterPro" id="IPR014717">
    <property type="entry name" value="Transl_elong_EF1B/ribsomal_bS6"/>
</dbReference>
<dbReference type="NCBIfam" id="TIGR00166">
    <property type="entry name" value="S6"/>
    <property type="match status" value="1"/>
</dbReference>
<dbReference type="PANTHER" id="PTHR21011">
    <property type="entry name" value="MITOCHONDRIAL 28S RIBOSOMAL PROTEIN S6"/>
    <property type="match status" value="1"/>
</dbReference>
<dbReference type="PANTHER" id="PTHR21011:SF1">
    <property type="entry name" value="SMALL RIBOSOMAL SUBUNIT PROTEIN BS6M"/>
    <property type="match status" value="1"/>
</dbReference>
<dbReference type="Pfam" id="PF01250">
    <property type="entry name" value="Ribosomal_S6"/>
    <property type="match status" value="1"/>
</dbReference>
<dbReference type="SUPFAM" id="SSF54995">
    <property type="entry name" value="Ribosomal protein S6"/>
    <property type="match status" value="1"/>
</dbReference>
<sequence>MKKYEILYIMRPNIGDEEIKKNVETINKIFYNNENKIIQSKELGLKDLAYCIDKHYKGYYVSMFLNAMPQMIEEFNRVVKINEDIIRSIVIKEE</sequence>
<keyword id="KW-1185">Reference proteome</keyword>
<keyword id="KW-0687">Ribonucleoprotein</keyword>
<keyword id="KW-0689">Ribosomal protein</keyword>
<keyword id="KW-0694">RNA-binding</keyword>
<keyword id="KW-0699">rRNA-binding</keyword>
<feature type="chain" id="PRO_1000133538" description="Small ribosomal subunit protein bS6">
    <location>
        <begin position="1"/>
        <end position="94"/>
    </location>
</feature>
<comment type="function">
    <text evidence="1">Binds together with bS18 to 16S ribosomal RNA.</text>
</comment>
<comment type="similarity">
    <text evidence="1">Belongs to the bacterial ribosomal protein bS6 family.</text>
</comment>
<evidence type="ECO:0000255" key="1">
    <source>
        <dbReference type="HAMAP-Rule" id="MF_00360"/>
    </source>
</evidence>
<evidence type="ECO:0000305" key="2"/>
<accession>B3R0K3</accession>
<protein>
    <recommendedName>
        <fullName evidence="1">Small ribosomal subunit protein bS6</fullName>
    </recommendedName>
    <alternativeName>
        <fullName evidence="2">30S ribosomal protein S6</fullName>
    </alternativeName>
</protein>
<reference key="1">
    <citation type="journal article" date="2008" name="BMC Genomics">
        <title>The linear chromosome of the plant-pathogenic mycoplasma 'Candidatus Phytoplasma mali'.</title>
        <authorList>
            <person name="Kube M."/>
            <person name="Schneider B."/>
            <person name="Kuhl H."/>
            <person name="Dandekar T."/>
            <person name="Heitmann K."/>
            <person name="Migdoll A.M."/>
            <person name="Reinhardt R."/>
            <person name="Seemueller E."/>
        </authorList>
    </citation>
    <scope>NUCLEOTIDE SEQUENCE [LARGE SCALE GENOMIC DNA]</scope>
    <source>
        <strain>AT</strain>
    </source>
</reference>